<sequence>MSDNDVAAKRLTKPKLERPKLYKVLLVNDDFTPREFVVMVLKAVFRMSEEAGYRVMMTAHKMGISVVVVCAKDVAETKAKEATDLGKEAGFPLLFTAEPEE</sequence>
<comment type="function">
    <text evidence="1">Involved in the modulation of the specificity of the ClpAP-mediated ATP-dependent protein degradation.</text>
</comment>
<comment type="subunit">
    <text evidence="1">Binds to the N-terminal domain of the chaperone ClpA.</text>
</comment>
<comment type="similarity">
    <text evidence="1">Belongs to the ClpS family.</text>
</comment>
<reference key="1">
    <citation type="journal article" date="2001" name="Proc. Natl. Acad. Sci. U.S.A.">
        <title>Analysis of the chromosome sequence of the legume symbiont Sinorhizobium meliloti strain 1021.</title>
        <authorList>
            <person name="Capela D."/>
            <person name="Barloy-Hubler F."/>
            <person name="Gouzy J."/>
            <person name="Bothe G."/>
            <person name="Ampe F."/>
            <person name="Batut J."/>
            <person name="Boistard P."/>
            <person name="Becker A."/>
            <person name="Boutry M."/>
            <person name="Cadieu E."/>
            <person name="Dreano S."/>
            <person name="Gloux S."/>
            <person name="Godrie T."/>
            <person name="Goffeau A."/>
            <person name="Kahn D."/>
            <person name="Kiss E."/>
            <person name="Lelaure V."/>
            <person name="Masuy D."/>
            <person name="Pohl T."/>
            <person name="Portetelle D."/>
            <person name="Puehler A."/>
            <person name="Purnelle B."/>
            <person name="Ramsperger U."/>
            <person name="Renard C."/>
            <person name="Thebault P."/>
            <person name="Vandenbol M."/>
            <person name="Weidner S."/>
            <person name="Galibert F."/>
        </authorList>
    </citation>
    <scope>NUCLEOTIDE SEQUENCE [LARGE SCALE GENOMIC DNA]</scope>
    <source>
        <strain>1021</strain>
    </source>
</reference>
<reference key="2">
    <citation type="journal article" date="2001" name="Science">
        <title>The composite genome of the legume symbiont Sinorhizobium meliloti.</title>
        <authorList>
            <person name="Galibert F."/>
            <person name="Finan T.M."/>
            <person name="Long S.R."/>
            <person name="Puehler A."/>
            <person name="Abola P."/>
            <person name="Ampe F."/>
            <person name="Barloy-Hubler F."/>
            <person name="Barnett M.J."/>
            <person name="Becker A."/>
            <person name="Boistard P."/>
            <person name="Bothe G."/>
            <person name="Boutry M."/>
            <person name="Bowser L."/>
            <person name="Buhrmester J."/>
            <person name="Cadieu E."/>
            <person name="Capela D."/>
            <person name="Chain P."/>
            <person name="Cowie A."/>
            <person name="Davis R.W."/>
            <person name="Dreano S."/>
            <person name="Federspiel N.A."/>
            <person name="Fisher R.F."/>
            <person name="Gloux S."/>
            <person name="Godrie T."/>
            <person name="Goffeau A."/>
            <person name="Golding B."/>
            <person name="Gouzy J."/>
            <person name="Gurjal M."/>
            <person name="Hernandez-Lucas I."/>
            <person name="Hong A."/>
            <person name="Huizar L."/>
            <person name="Hyman R.W."/>
            <person name="Jones T."/>
            <person name="Kahn D."/>
            <person name="Kahn M.L."/>
            <person name="Kalman S."/>
            <person name="Keating D.H."/>
            <person name="Kiss E."/>
            <person name="Komp C."/>
            <person name="Lelaure V."/>
            <person name="Masuy D."/>
            <person name="Palm C."/>
            <person name="Peck M.C."/>
            <person name="Pohl T.M."/>
            <person name="Portetelle D."/>
            <person name="Purnelle B."/>
            <person name="Ramsperger U."/>
            <person name="Surzycki R."/>
            <person name="Thebault P."/>
            <person name="Vandenbol M."/>
            <person name="Vorhoelter F.J."/>
            <person name="Weidner S."/>
            <person name="Wells D.H."/>
            <person name="Wong K."/>
            <person name="Yeh K.-C."/>
            <person name="Batut J."/>
        </authorList>
    </citation>
    <scope>NUCLEOTIDE SEQUENCE [LARGE SCALE GENOMIC DNA]</scope>
    <source>
        <strain>1021</strain>
    </source>
</reference>
<name>CLPS2_RHIME</name>
<gene>
    <name evidence="1" type="primary">clpS2</name>
    <name type="ordered locus">R02356</name>
    <name type="ORF">SMc02694</name>
</gene>
<accession>Q92N66</accession>
<keyword id="KW-1185">Reference proteome</keyword>
<organism>
    <name type="scientific">Rhizobium meliloti (strain 1021)</name>
    <name type="common">Ensifer meliloti</name>
    <name type="synonym">Sinorhizobium meliloti</name>
    <dbReference type="NCBI Taxonomy" id="266834"/>
    <lineage>
        <taxon>Bacteria</taxon>
        <taxon>Pseudomonadati</taxon>
        <taxon>Pseudomonadota</taxon>
        <taxon>Alphaproteobacteria</taxon>
        <taxon>Hyphomicrobiales</taxon>
        <taxon>Rhizobiaceae</taxon>
        <taxon>Sinorhizobium/Ensifer group</taxon>
        <taxon>Sinorhizobium</taxon>
    </lineage>
</organism>
<proteinExistence type="inferred from homology"/>
<feature type="chain" id="PRO_0000215741" description="ATP-dependent Clp protease adapter protein ClpS 2">
    <location>
        <begin position="1"/>
        <end position="101"/>
    </location>
</feature>
<evidence type="ECO:0000255" key="1">
    <source>
        <dbReference type="HAMAP-Rule" id="MF_00302"/>
    </source>
</evidence>
<dbReference type="EMBL" id="AL591688">
    <property type="protein sequence ID" value="CAC46935.1"/>
    <property type="molecule type" value="Genomic_DNA"/>
</dbReference>
<dbReference type="RefSeq" id="NP_386462.1">
    <property type="nucleotide sequence ID" value="NC_003047.1"/>
</dbReference>
<dbReference type="SMR" id="Q92N66"/>
<dbReference type="EnsemblBacteria" id="CAC46935">
    <property type="protein sequence ID" value="CAC46935"/>
    <property type="gene ID" value="SMc02694"/>
</dbReference>
<dbReference type="KEGG" id="sme:SMc02694"/>
<dbReference type="PATRIC" id="fig|266834.11.peg.3837"/>
<dbReference type="eggNOG" id="COG2127">
    <property type="taxonomic scope" value="Bacteria"/>
</dbReference>
<dbReference type="HOGENOM" id="CLU_134358_3_0_5"/>
<dbReference type="OrthoDB" id="9796121at2"/>
<dbReference type="Proteomes" id="UP000001976">
    <property type="component" value="Chromosome"/>
</dbReference>
<dbReference type="GO" id="GO:0030163">
    <property type="term" value="P:protein catabolic process"/>
    <property type="evidence" value="ECO:0007669"/>
    <property type="project" value="InterPro"/>
</dbReference>
<dbReference type="GO" id="GO:0006508">
    <property type="term" value="P:proteolysis"/>
    <property type="evidence" value="ECO:0007669"/>
    <property type="project" value="UniProtKB-UniRule"/>
</dbReference>
<dbReference type="Gene3D" id="3.30.1390.10">
    <property type="match status" value="1"/>
</dbReference>
<dbReference type="HAMAP" id="MF_00302">
    <property type="entry name" value="ClpS"/>
    <property type="match status" value="1"/>
</dbReference>
<dbReference type="InterPro" id="IPR022935">
    <property type="entry name" value="ClpS"/>
</dbReference>
<dbReference type="InterPro" id="IPR003769">
    <property type="entry name" value="ClpS_core"/>
</dbReference>
<dbReference type="InterPro" id="IPR014719">
    <property type="entry name" value="Ribosomal_bL12_C/ClpS-like"/>
</dbReference>
<dbReference type="NCBIfam" id="NF009561">
    <property type="entry name" value="PRK13019.1-1"/>
    <property type="match status" value="1"/>
</dbReference>
<dbReference type="NCBIfam" id="NF009564">
    <property type="entry name" value="PRK13019.1-4"/>
    <property type="match status" value="1"/>
</dbReference>
<dbReference type="PANTHER" id="PTHR33473:SF19">
    <property type="entry name" value="ATP-DEPENDENT CLP PROTEASE ADAPTER PROTEIN CLPS"/>
    <property type="match status" value="1"/>
</dbReference>
<dbReference type="PANTHER" id="PTHR33473">
    <property type="entry name" value="ATP-DEPENDENT CLP PROTEASE ADAPTER PROTEIN CLPS1, CHLOROPLASTIC"/>
    <property type="match status" value="1"/>
</dbReference>
<dbReference type="Pfam" id="PF02617">
    <property type="entry name" value="ClpS"/>
    <property type="match status" value="1"/>
</dbReference>
<dbReference type="SUPFAM" id="SSF54736">
    <property type="entry name" value="ClpS-like"/>
    <property type="match status" value="1"/>
</dbReference>
<protein>
    <recommendedName>
        <fullName evidence="1">ATP-dependent Clp protease adapter protein ClpS 2</fullName>
    </recommendedName>
</protein>